<protein>
    <recommendedName>
        <fullName evidence="1">Ribosomal RNA small subunit methyltransferase J</fullName>
        <ecNumber evidence="1">2.1.1.242</ecNumber>
    </recommendedName>
    <alternativeName>
        <fullName evidence="1">16S rRNA m2G1516 methyltransferase</fullName>
    </alternativeName>
    <alternativeName>
        <fullName evidence="1">rRNA (guanine-N(2)-)-methyltransferase</fullName>
    </alternativeName>
</protein>
<name>RSMJ_LARHH</name>
<proteinExistence type="inferred from homology"/>
<accession>C1DD01</accession>
<sequence length="281" mass="29560">MHEMIFPCGLSHQRSSADNAPLPRLMVAMFHGLLATPDVSPATLERFAAGYGLSCLATPPDEGYWLAWRAGVLGLESPHHGAVTADFVGGAARHRREFGGGAGQPVARAIGLKGSQRPQVVDATAGLGRDAFVMASLGCRVTLVERSPVAAALLDDALARARLDPATHEIAARMQLVFADAADWLAQQPAGSVDVVYLDPMFPDTGKSAAAKKEMQAFQVVVGDDLDAGRLLLVARQVAGKRVVVKRPRLGALLTGEKPAGQQVGKSTRFDLYAPLPPASA</sequence>
<feature type="chain" id="PRO_0000383382" description="Ribosomal RNA small subunit methyltransferase J">
    <location>
        <begin position="1"/>
        <end position="281"/>
    </location>
</feature>
<feature type="binding site" evidence="1">
    <location>
        <begin position="129"/>
        <end position="130"/>
    </location>
    <ligand>
        <name>S-adenosyl-L-methionine</name>
        <dbReference type="ChEBI" id="CHEBI:59789"/>
    </ligand>
</feature>
<feature type="binding site" evidence="1">
    <location>
        <begin position="145"/>
        <end position="146"/>
    </location>
    <ligand>
        <name>S-adenosyl-L-methionine</name>
        <dbReference type="ChEBI" id="CHEBI:59789"/>
    </ligand>
</feature>
<feature type="binding site" evidence="1">
    <location>
        <position position="199"/>
    </location>
    <ligand>
        <name>S-adenosyl-L-methionine</name>
        <dbReference type="ChEBI" id="CHEBI:59789"/>
    </ligand>
</feature>
<comment type="function">
    <text evidence="1">Specifically methylates the guanosine in position 1516 of 16S rRNA.</text>
</comment>
<comment type="catalytic activity">
    <reaction evidence="1">
        <text>guanosine(1516) in 16S rRNA + S-adenosyl-L-methionine = N(2)-methylguanosine(1516) in 16S rRNA + S-adenosyl-L-homocysteine + H(+)</text>
        <dbReference type="Rhea" id="RHEA:43220"/>
        <dbReference type="Rhea" id="RHEA-COMP:10412"/>
        <dbReference type="Rhea" id="RHEA-COMP:10413"/>
        <dbReference type="ChEBI" id="CHEBI:15378"/>
        <dbReference type="ChEBI" id="CHEBI:57856"/>
        <dbReference type="ChEBI" id="CHEBI:59789"/>
        <dbReference type="ChEBI" id="CHEBI:74269"/>
        <dbReference type="ChEBI" id="CHEBI:74481"/>
        <dbReference type="EC" id="2.1.1.242"/>
    </reaction>
</comment>
<comment type="subcellular location">
    <subcellularLocation>
        <location evidence="1">Cytoplasm</location>
    </subcellularLocation>
</comment>
<comment type="similarity">
    <text evidence="1">Belongs to the methyltransferase superfamily. RsmJ family.</text>
</comment>
<organism>
    <name type="scientific">Laribacter hongkongensis (strain HLHK9)</name>
    <dbReference type="NCBI Taxonomy" id="557598"/>
    <lineage>
        <taxon>Bacteria</taxon>
        <taxon>Pseudomonadati</taxon>
        <taxon>Pseudomonadota</taxon>
        <taxon>Betaproteobacteria</taxon>
        <taxon>Neisseriales</taxon>
        <taxon>Aquaspirillaceae</taxon>
        <taxon>Laribacter</taxon>
    </lineage>
</organism>
<dbReference type="EC" id="2.1.1.242" evidence="1"/>
<dbReference type="EMBL" id="CP001154">
    <property type="protein sequence ID" value="ACO73636.1"/>
    <property type="molecule type" value="Genomic_DNA"/>
</dbReference>
<dbReference type="RefSeq" id="WP_012696128.1">
    <property type="nucleotide sequence ID" value="NC_012559.1"/>
</dbReference>
<dbReference type="SMR" id="C1DD01"/>
<dbReference type="STRING" id="557598.LHK_00643"/>
<dbReference type="KEGG" id="lhk:LHK_00643"/>
<dbReference type="eggNOG" id="COG0742">
    <property type="taxonomic scope" value="Bacteria"/>
</dbReference>
<dbReference type="HOGENOM" id="CLU_076324_1_0_4"/>
<dbReference type="Proteomes" id="UP000002010">
    <property type="component" value="Chromosome"/>
</dbReference>
<dbReference type="GO" id="GO:0005737">
    <property type="term" value="C:cytoplasm"/>
    <property type="evidence" value="ECO:0007669"/>
    <property type="project" value="UniProtKB-SubCell"/>
</dbReference>
<dbReference type="GO" id="GO:0008990">
    <property type="term" value="F:rRNA (guanine-N2-)-methyltransferase activity"/>
    <property type="evidence" value="ECO:0007669"/>
    <property type="project" value="UniProtKB-UniRule"/>
</dbReference>
<dbReference type="CDD" id="cd02440">
    <property type="entry name" value="AdoMet_MTases"/>
    <property type="match status" value="1"/>
</dbReference>
<dbReference type="Gene3D" id="3.40.50.150">
    <property type="entry name" value="Vaccinia Virus protein VP39"/>
    <property type="match status" value="1"/>
</dbReference>
<dbReference type="HAMAP" id="MF_01523">
    <property type="entry name" value="16SrRNA_methyltr_J"/>
    <property type="match status" value="1"/>
</dbReference>
<dbReference type="InterPro" id="IPR007536">
    <property type="entry name" value="16SrRNA_methylTrfase_J"/>
</dbReference>
<dbReference type="InterPro" id="IPR029063">
    <property type="entry name" value="SAM-dependent_MTases_sf"/>
</dbReference>
<dbReference type="PANTHER" id="PTHR36112">
    <property type="entry name" value="RIBOSOMAL RNA SMALL SUBUNIT METHYLTRANSFERASE J"/>
    <property type="match status" value="1"/>
</dbReference>
<dbReference type="PANTHER" id="PTHR36112:SF1">
    <property type="entry name" value="RIBOSOMAL RNA SMALL SUBUNIT METHYLTRANSFERASE J"/>
    <property type="match status" value="1"/>
</dbReference>
<dbReference type="Pfam" id="PF04445">
    <property type="entry name" value="SAM_MT"/>
    <property type="match status" value="1"/>
</dbReference>
<dbReference type="SUPFAM" id="SSF53335">
    <property type="entry name" value="S-adenosyl-L-methionine-dependent methyltransferases"/>
    <property type="match status" value="1"/>
</dbReference>
<gene>
    <name evidence="1" type="primary">rsmJ</name>
    <name type="ordered locus">LHK_00643</name>
</gene>
<reference key="1">
    <citation type="journal article" date="2009" name="PLoS Genet.">
        <title>The complete genome and proteome of Laribacter hongkongensis reveal potential mechanisms for adaptations to different temperatures and habitats.</title>
        <authorList>
            <person name="Woo P.C.Y."/>
            <person name="Lau S.K.P."/>
            <person name="Tse H."/>
            <person name="Teng J.L.L."/>
            <person name="Curreem S.O."/>
            <person name="Tsang A.K.L."/>
            <person name="Fan R.Y.Y."/>
            <person name="Wong G.K.M."/>
            <person name="Huang Y."/>
            <person name="Loman N.J."/>
            <person name="Snyder L.A.S."/>
            <person name="Cai J.J."/>
            <person name="Huang J.-D."/>
            <person name="Mak W."/>
            <person name="Pallen M.J."/>
            <person name="Lok S."/>
            <person name="Yuen K.-Y."/>
        </authorList>
    </citation>
    <scope>NUCLEOTIDE SEQUENCE [LARGE SCALE GENOMIC DNA]</scope>
    <source>
        <strain>HLHK9</strain>
    </source>
</reference>
<keyword id="KW-0963">Cytoplasm</keyword>
<keyword id="KW-0489">Methyltransferase</keyword>
<keyword id="KW-1185">Reference proteome</keyword>
<keyword id="KW-0698">rRNA processing</keyword>
<keyword id="KW-0949">S-adenosyl-L-methionine</keyword>
<keyword id="KW-0808">Transferase</keyword>
<evidence type="ECO:0000255" key="1">
    <source>
        <dbReference type="HAMAP-Rule" id="MF_01523"/>
    </source>
</evidence>